<gene>
    <name type="primary">ubi4</name>
    <name type="ordered locus">KLLA0E00682g</name>
</gene>
<feature type="chain" id="PRO_0000396289" description="Ubiquitin">
    <location>
        <begin position="1"/>
        <end position="76"/>
    </location>
</feature>
<feature type="chain" id="PRO_0000396290" description="Ubiquitin">
    <location>
        <begin position="77"/>
        <end position="152"/>
    </location>
</feature>
<feature type="chain" id="PRO_0000396291" description="Ubiquitin">
    <location>
        <begin position="153"/>
        <end position="228"/>
    </location>
</feature>
<feature type="chain" id="PRO_0000396292" description="Ubiquitin">
    <location>
        <begin position="229"/>
        <end position="304"/>
    </location>
</feature>
<feature type="chain" id="PRO_0000396293" description="Ubiquitin">
    <location>
        <begin position="305"/>
        <end position="380"/>
    </location>
</feature>
<feature type="propeptide" id="PRO_0000396294">
    <location>
        <position position="381"/>
    </location>
</feature>
<feature type="domain" description="Ubiquitin-like 1" evidence="2">
    <location>
        <begin position="1"/>
        <end position="76"/>
    </location>
</feature>
<feature type="domain" description="Ubiquitin-like 2" evidence="2">
    <location>
        <begin position="77"/>
        <end position="152"/>
    </location>
</feature>
<feature type="domain" description="Ubiquitin-like 3" evidence="2">
    <location>
        <begin position="153"/>
        <end position="228"/>
    </location>
</feature>
<feature type="domain" description="Ubiquitin-like 4" evidence="2">
    <location>
        <begin position="229"/>
        <end position="304"/>
    </location>
</feature>
<feature type="domain" description="Ubiquitin-like 5" evidence="2">
    <location>
        <begin position="305"/>
        <end position="380"/>
    </location>
</feature>
<feature type="cross-link" description="Glycyl lysine isopeptide (Lys-Gly) (interchain with G-Cter in ubiquitin)">
    <location>
        <position position="6"/>
    </location>
</feature>
<feature type="cross-link" description="Glycyl lysine isopeptide (Lys-Gly) (interchain with G-Cter in ubiquitin)">
    <location>
        <position position="11"/>
    </location>
</feature>
<feature type="cross-link" description="Glycyl lysine isopeptide (Lys-Gly) (interchain with G-Cter in ubiquitin)">
    <location>
        <position position="27"/>
    </location>
</feature>
<feature type="cross-link" description="Glycyl lysine isopeptide (Lys-Gly) (interchain with G-Cter in ubiquitin)">
    <location>
        <position position="29"/>
    </location>
</feature>
<feature type="cross-link" description="Glycyl lysine isopeptide (Lys-Gly) (interchain with G-Cter in ubiquitin)">
    <location>
        <position position="33"/>
    </location>
</feature>
<feature type="cross-link" description="Glycyl lysine isopeptide (Lys-Gly) (interchain with G-Cter in ubiquitin)" evidence="1">
    <location>
        <position position="48"/>
    </location>
</feature>
<feature type="cross-link" description="Glycyl lysine isopeptide (Lys-Gly) (interchain with G-Cter in ubiquitin)">
    <location>
        <position position="63"/>
    </location>
</feature>
<feature type="cross-link" description="Glycyl lysine isopeptide (Gly-Lys) (interchain with K-? in acceptor proteins)" evidence="2">
    <location>
        <position position="76"/>
    </location>
</feature>
<comment type="function">
    <text evidence="1">Ubiquitin exists either covalently attached to another protein, or free (unanchored). When covalently bound, it is conjugated to target proteins via an isopeptide bond either as a monomer (monoubiquitin), a polymer linked via different Lys residues of the ubiquitin (polyubiquitin chains) or a linear polymer linked via the initiator Met of the ubiquitin (linear polyubiquitin chains). Polyubiquitin chains, when attached to a target protein, have different functions depending on the Lys residue of the ubiquitin that is linked: Lys-6-linked may be involved in DNA repair; Lys-11-linked is involved in ERAD (endoplasmic reticulum-associated degradation) and in cell-cycle regulation; Lys-29-linked is involved in lysosomal degradation; Lys-33-linked is involved in kinase modification; Lys-48-linked is involved in protein degradation via the proteasome; Lys-63-linked is involved in endocytosis, and DNA-damage responses. Linear polymer chains formed via attachment by the initiator Met lead to cell signaling. Ubiquitin is usually conjugated to Lys residues of target proteins, however, in rare cases, conjugation to Cys or Ser residues has been observed. When polyubiquitin is free (unanchored-polyubiquitin), it also has distinct roles, such as in activation of protein kinases, and in signaling (By similarity).</text>
</comment>
<comment type="subcellular location">
    <subcellularLocation>
        <location evidence="1">Cytoplasm</location>
    </subcellularLocation>
    <subcellularLocation>
        <location evidence="1">Nucleus</location>
    </subcellularLocation>
</comment>
<comment type="miscellaneous">
    <text>For the sake of clarity sequence features are annotated only for the first chain, and are not repeated for each of the following chains.</text>
</comment>
<comment type="miscellaneous">
    <text>Ubiquitin is encoded by several different genes. Ubi3 genes code for a single copy of ubiquitin fused to the ribosomal proteins eS31. Ubi4 is synthesized as a polyubiquitin precursor with 5 exact head to tail repeats.</text>
</comment>
<comment type="similarity">
    <text evidence="3">Belongs to the ubiquitin family.</text>
</comment>
<organism>
    <name type="scientific">Kluyveromyces lactis (strain ATCC 8585 / CBS 2359 / DSM 70799 / NBRC 1267 / NRRL Y-1140 / WM37)</name>
    <name type="common">Yeast</name>
    <name type="synonym">Candida sphaerica</name>
    <dbReference type="NCBI Taxonomy" id="284590"/>
    <lineage>
        <taxon>Eukaryota</taxon>
        <taxon>Fungi</taxon>
        <taxon>Dikarya</taxon>
        <taxon>Ascomycota</taxon>
        <taxon>Saccharomycotina</taxon>
        <taxon>Saccharomycetes</taxon>
        <taxon>Saccharomycetales</taxon>
        <taxon>Saccharomycetaceae</taxon>
        <taxon>Kluyveromyces</taxon>
    </lineage>
</organism>
<accession>P0CG75</accession>
<accession>Q6CQ09</accession>
<accession>Q6CQB8</accession>
<accession>Q9Y848</accession>
<accession>Q9Y852</accession>
<dbReference type="EMBL" id="AJ243800">
    <property type="protein sequence ID" value="CAB50898.1"/>
    <property type="molecule type" value="Genomic_DNA"/>
</dbReference>
<dbReference type="EMBL" id="CR382125">
    <property type="protein sequence ID" value="CAG99067.1"/>
    <property type="molecule type" value="Genomic_DNA"/>
</dbReference>
<dbReference type="PIR" id="T45526">
    <property type="entry name" value="T45526"/>
</dbReference>
<dbReference type="RefSeq" id="XP_453980.1">
    <property type="nucleotide sequence ID" value="XM_453980.1"/>
</dbReference>
<dbReference type="SMR" id="P0CG75"/>
<dbReference type="FunCoup" id="P0CG75">
    <property type="interactions" value="725"/>
</dbReference>
<dbReference type="STRING" id="284590.P0CG75"/>
<dbReference type="PaxDb" id="284590-P0CG75"/>
<dbReference type="KEGG" id="kla:KLLA0_E00749g"/>
<dbReference type="eggNOG" id="KOG0001">
    <property type="taxonomic scope" value="Eukaryota"/>
</dbReference>
<dbReference type="HOGENOM" id="CLU_010412_7_0_1"/>
<dbReference type="InParanoid" id="P0CG75"/>
<dbReference type="OMA" id="VHENTRR"/>
<dbReference type="Proteomes" id="UP000000598">
    <property type="component" value="Chromosome E"/>
</dbReference>
<dbReference type="GO" id="GO:0005737">
    <property type="term" value="C:cytoplasm"/>
    <property type="evidence" value="ECO:0007669"/>
    <property type="project" value="UniProtKB-SubCell"/>
</dbReference>
<dbReference type="GO" id="GO:0005634">
    <property type="term" value="C:nucleus"/>
    <property type="evidence" value="ECO:0007669"/>
    <property type="project" value="UniProtKB-SubCell"/>
</dbReference>
<dbReference type="CDD" id="cd01803">
    <property type="entry name" value="Ubl_ubiquitin"/>
    <property type="match status" value="5"/>
</dbReference>
<dbReference type="FunFam" id="3.10.20.90:FF:000004">
    <property type="entry name" value="Polyubiquitin Ubiquitin"/>
    <property type="match status" value="5"/>
</dbReference>
<dbReference type="Gene3D" id="3.10.20.90">
    <property type="entry name" value="Phosphatidylinositol 3-kinase Catalytic Subunit, Chain A, domain 1"/>
    <property type="match status" value="5"/>
</dbReference>
<dbReference type="InterPro" id="IPR000626">
    <property type="entry name" value="Ubiquitin-like_dom"/>
</dbReference>
<dbReference type="InterPro" id="IPR029071">
    <property type="entry name" value="Ubiquitin-like_domsf"/>
</dbReference>
<dbReference type="InterPro" id="IPR019954">
    <property type="entry name" value="Ubiquitin_CS"/>
</dbReference>
<dbReference type="InterPro" id="IPR019956">
    <property type="entry name" value="Ubiquitin_dom"/>
</dbReference>
<dbReference type="InterPro" id="IPR050158">
    <property type="entry name" value="Ubiquitin_ubiquitin-like"/>
</dbReference>
<dbReference type="PANTHER" id="PTHR10666">
    <property type="entry name" value="UBIQUITIN"/>
    <property type="match status" value="1"/>
</dbReference>
<dbReference type="Pfam" id="PF00240">
    <property type="entry name" value="ubiquitin"/>
    <property type="match status" value="5"/>
</dbReference>
<dbReference type="PRINTS" id="PR00348">
    <property type="entry name" value="UBIQUITIN"/>
</dbReference>
<dbReference type="SMART" id="SM00213">
    <property type="entry name" value="UBQ"/>
    <property type="match status" value="5"/>
</dbReference>
<dbReference type="SUPFAM" id="SSF54236">
    <property type="entry name" value="Ubiquitin-like"/>
    <property type="match status" value="5"/>
</dbReference>
<dbReference type="PROSITE" id="PS00299">
    <property type="entry name" value="UBIQUITIN_1"/>
    <property type="match status" value="5"/>
</dbReference>
<dbReference type="PROSITE" id="PS50053">
    <property type="entry name" value="UBIQUITIN_2"/>
    <property type="match status" value="5"/>
</dbReference>
<protein>
    <recommendedName>
        <fullName>Polyubiquitin</fullName>
    </recommendedName>
    <component>
        <recommendedName>
            <fullName>Ubiquitin</fullName>
        </recommendedName>
    </component>
</protein>
<proteinExistence type="evidence at protein level"/>
<keyword id="KW-0963">Cytoplasm</keyword>
<keyword id="KW-1017">Isopeptide bond</keyword>
<keyword id="KW-0539">Nucleus</keyword>
<keyword id="KW-1185">Reference proteome</keyword>
<keyword id="KW-0677">Repeat</keyword>
<keyword id="KW-0832">Ubl conjugation</keyword>
<reference key="1">
    <citation type="journal article" date="2000" name="Yeast">
        <title>The ubiquitin-encoding genes of Kluyveromyces lactis.</title>
        <authorList>
            <person name="Bao W.-G."/>
            <person name="Fukuhara H."/>
        </authorList>
    </citation>
    <scope>NUCLEOTIDE SEQUENCE [GENOMIC DNA]</scope>
    <source>
        <strain>ATCC 76492 / CBS 2359/152 / CLIB 210</strain>
    </source>
</reference>
<reference key="2">
    <citation type="journal article" date="2004" name="Nature">
        <title>Genome evolution in yeasts.</title>
        <authorList>
            <person name="Dujon B."/>
            <person name="Sherman D."/>
            <person name="Fischer G."/>
            <person name="Durrens P."/>
            <person name="Casaregola S."/>
            <person name="Lafontaine I."/>
            <person name="de Montigny J."/>
            <person name="Marck C."/>
            <person name="Neuveglise C."/>
            <person name="Talla E."/>
            <person name="Goffard N."/>
            <person name="Frangeul L."/>
            <person name="Aigle M."/>
            <person name="Anthouard V."/>
            <person name="Babour A."/>
            <person name="Barbe V."/>
            <person name="Barnay S."/>
            <person name="Blanchin S."/>
            <person name="Beckerich J.-M."/>
            <person name="Beyne E."/>
            <person name="Bleykasten C."/>
            <person name="Boisrame A."/>
            <person name="Boyer J."/>
            <person name="Cattolico L."/>
            <person name="Confanioleri F."/>
            <person name="de Daruvar A."/>
            <person name="Despons L."/>
            <person name="Fabre E."/>
            <person name="Fairhead C."/>
            <person name="Ferry-Dumazet H."/>
            <person name="Groppi A."/>
            <person name="Hantraye F."/>
            <person name="Hennequin C."/>
            <person name="Jauniaux N."/>
            <person name="Joyet P."/>
            <person name="Kachouri R."/>
            <person name="Kerrest A."/>
            <person name="Koszul R."/>
            <person name="Lemaire M."/>
            <person name="Lesur I."/>
            <person name="Ma L."/>
            <person name="Muller H."/>
            <person name="Nicaud J.-M."/>
            <person name="Nikolski M."/>
            <person name="Oztas S."/>
            <person name="Ozier-Kalogeropoulos O."/>
            <person name="Pellenz S."/>
            <person name="Potier S."/>
            <person name="Richard G.-F."/>
            <person name="Straub M.-L."/>
            <person name="Suleau A."/>
            <person name="Swennen D."/>
            <person name="Tekaia F."/>
            <person name="Wesolowski-Louvel M."/>
            <person name="Westhof E."/>
            <person name="Wirth B."/>
            <person name="Zeniou-Meyer M."/>
            <person name="Zivanovic Y."/>
            <person name="Bolotin-Fukuhara M."/>
            <person name="Thierry A."/>
            <person name="Bouchier C."/>
            <person name="Caudron B."/>
            <person name="Scarpelli C."/>
            <person name="Gaillardin C."/>
            <person name="Weissenbach J."/>
            <person name="Wincker P."/>
            <person name="Souciet J.-L."/>
        </authorList>
    </citation>
    <scope>NUCLEOTIDE SEQUENCE [LARGE SCALE GENOMIC DNA]</scope>
    <source>
        <strain>ATCC 8585 / CBS 2359 / DSM 70799 / NBRC 1267 / NRRL Y-1140 / WM37</strain>
    </source>
</reference>
<name>UBI4P_KLULA</name>
<sequence>MQIFVKTLTGKTITLEVESSDTIDNVKSKIQDKEGIPPDQQRLIFAGKQLEDGRTLSDYNIQKESTLHLVLRLRGGMQIFVKTLTGKTITLEVESSDTIDNVKSKIQDKEGIPPDQQRLIFAGKQLEDGRTLSDYNIQKESTLHLVLRLRGGMQIFVKTLTGKTITLEVESSDTIDNVKSKIQDKEGIPPDQQRLIFAGKQLEDGRTLSDYNIQKESTLHLVLRLRGGMQIFVKTLTGKTITLEVESSDTIDNVKSKIQDKEGIPPDQQRLIFAGKQLEDGRTLSDYNIQKESTLHLVLRLRGGMQIFVKTLTGKTITLEVESSDTIDNVKSKIQDKEGIPPDQQRLIFAGKQLEDGRTLSDYNIQKESTLHLVLRLRGGI</sequence>
<evidence type="ECO:0000250" key="1"/>
<evidence type="ECO:0000255" key="2">
    <source>
        <dbReference type="PROSITE-ProRule" id="PRU00214"/>
    </source>
</evidence>
<evidence type="ECO:0000305" key="3"/>